<organism>
    <name type="scientific">Homo sapiens</name>
    <name type="common">Human</name>
    <dbReference type="NCBI Taxonomy" id="9606"/>
    <lineage>
        <taxon>Eukaryota</taxon>
        <taxon>Metazoa</taxon>
        <taxon>Chordata</taxon>
        <taxon>Craniata</taxon>
        <taxon>Vertebrata</taxon>
        <taxon>Euteleostomi</taxon>
        <taxon>Mammalia</taxon>
        <taxon>Eutheria</taxon>
        <taxon>Euarchontoglires</taxon>
        <taxon>Primates</taxon>
        <taxon>Haplorrhini</taxon>
        <taxon>Catarrhini</taxon>
        <taxon>Hominidae</taxon>
        <taxon>Homo</taxon>
    </lineage>
</organism>
<reference key="1">
    <citation type="journal article" date="2006" name="Nature">
        <title>Human chromosome 11 DNA sequence and analysis including novel gene identification.</title>
        <authorList>
            <person name="Taylor T.D."/>
            <person name="Noguchi H."/>
            <person name="Totoki Y."/>
            <person name="Toyoda A."/>
            <person name="Kuroki Y."/>
            <person name="Dewar K."/>
            <person name="Lloyd C."/>
            <person name="Itoh T."/>
            <person name="Takeda T."/>
            <person name="Kim D.-W."/>
            <person name="She X."/>
            <person name="Barlow K.F."/>
            <person name="Bloom T."/>
            <person name="Bruford E."/>
            <person name="Chang J.L."/>
            <person name="Cuomo C.A."/>
            <person name="Eichler E."/>
            <person name="FitzGerald M.G."/>
            <person name="Jaffe D.B."/>
            <person name="LaButti K."/>
            <person name="Nicol R."/>
            <person name="Park H.-S."/>
            <person name="Seaman C."/>
            <person name="Sougnez C."/>
            <person name="Yang X."/>
            <person name="Zimmer A.R."/>
            <person name="Zody M.C."/>
            <person name="Birren B.W."/>
            <person name="Nusbaum C."/>
            <person name="Fujiyama A."/>
            <person name="Hattori M."/>
            <person name="Rogers J."/>
            <person name="Lander E.S."/>
            <person name="Sakaki Y."/>
        </authorList>
    </citation>
    <scope>NUCLEOTIDE SEQUENCE [LARGE SCALE GENOMIC DNA]</scope>
</reference>
<reference key="2">
    <citation type="journal article" date="2007" name="BMC Genomics">
        <title>The full-ORF clone resource of the German cDNA consortium.</title>
        <authorList>
            <person name="Bechtel S."/>
            <person name="Rosenfelder H."/>
            <person name="Duda A."/>
            <person name="Schmidt C.P."/>
            <person name="Ernst U."/>
            <person name="Wellenreuther R."/>
            <person name="Mehrle A."/>
            <person name="Schuster C."/>
            <person name="Bahr A."/>
            <person name="Bloecker H."/>
            <person name="Heubner D."/>
            <person name="Hoerlein A."/>
            <person name="Michel G."/>
            <person name="Wedler H."/>
            <person name="Koehrer K."/>
            <person name="Ottenwaelder B."/>
            <person name="Poustka A."/>
            <person name="Wiemann S."/>
            <person name="Schupp I."/>
        </authorList>
    </citation>
    <scope>NUCLEOTIDE SEQUENCE [LARGE SCALE MRNA] OF 14-1523</scope>
    <scope>VARIANTS LEU-133 AND VAL-569</scope>
    <source>
        <tissue>Melanoma</tissue>
    </source>
</reference>
<reference key="3">
    <citation type="journal article" date="2004" name="Nat. Genet.">
        <title>Complete sequencing and characterization of 21,243 full-length human cDNAs.</title>
        <authorList>
            <person name="Ota T."/>
            <person name="Suzuki Y."/>
            <person name="Nishikawa T."/>
            <person name="Otsuki T."/>
            <person name="Sugiyama T."/>
            <person name="Irie R."/>
            <person name="Wakamatsu A."/>
            <person name="Hayashi K."/>
            <person name="Sato H."/>
            <person name="Nagai K."/>
            <person name="Kimura K."/>
            <person name="Makita H."/>
            <person name="Sekine M."/>
            <person name="Obayashi M."/>
            <person name="Nishi T."/>
            <person name="Shibahara T."/>
            <person name="Tanaka T."/>
            <person name="Ishii S."/>
            <person name="Yamamoto J."/>
            <person name="Saito K."/>
            <person name="Kawai Y."/>
            <person name="Isono Y."/>
            <person name="Nakamura Y."/>
            <person name="Nagahari K."/>
            <person name="Murakami K."/>
            <person name="Yasuda T."/>
            <person name="Iwayanagi T."/>
            <person name="Wagatsuma M."/>
            <person name="Shiratori A."/>
            <person name="Sudo H."/>
            <person name="Hosoiri T."/>
            <person name="Kaku Y."/>
            <person name="Kodaira H."/>
            <person name="Kondo H."/>
            <person name="Sugawara M."/>
            <person name="Takahashi M."/>
            <person name="Kanda K."/>
            <person name="Yokoi T."/>
            <person name="Furuya T."/>
            <person name="Kikkawa E."/>
            <person name="Omura Y."/>
            <person name="Abe K."/>
            <person name="Kamihara K."/>
            <person name="Katsuta N."/>
            <person name="Sato K."/>
            <person name="Tanikawa M."/>
            <person name="Yamazaki M."/>
            <person name="Ninomiya K."/>
            <person name="Ishibashi T."/>
            <person name="Yamashita H."/>
            <person name="Murakawa K."/>
            <person name="Fujimori K."/>
            <person name="Tanai H."/>
            <person name="Kimata M."/>
            <person name="Watanabe M."/>
            <person name="Hiraoka S."/>
            <person name="Chiba Y."/>
            <person name="Ishida S."/>
            <person name="Ono Y."/>
            <person name="Takiguchi S."/>
            <person name="Watanabe S."/>
            <person name="Yosida M."/>
            <person name="Hotuta T."/>
            <person name="Kusano J."/>
            <person name="Kanehori K."/>
            <person name="Takahashi-Fujii A."/>
            <person name="Hara H."/>
            <person name="Tanase T.-O."/>
            <person name="Nomura Y."/>
            <person name="Togiya S."/>
            <person name="Komai F."/>
            <person name="Hara R."/>
            <person name="Takeuchi K."/>
            <person name="Arita M."/>
            <person name="Imose N."/>
            <person name="Musashino K."/>
            <person name="Yuuki H."/>
            <person name="Oshima A."/>
            <person name="Sasaki N."/>
            <person name="Aotsuka S."/>
            <person name="Yoshikawa Y."/>
            <person name="Matsunawa H."/>
            <person name="Ichihara T."/>
            <person name="Shiohata N."/>
            <person name="Sano S."/>
            <person name="Moriya S."/>
            <person name="Momiyama H."/>
            <person name="Satoh N."/>
            <person name="Takami S."/>
            <person name="Terashima Y."/>
            <person name="Suzuki O."/>
            <person name="Nakagawa S."/>
            <person name="Senoh A."/>
            <person name="Mizoguchi H."/>
            <person name="Goto Y."/>
            <person name="Shimizu F."/>
            <person name="Wakebe H."/>
            <person name="Hishigaki H."/>
            <person name="Watanabe T."/>
            <person name="Sugiyama A."/>
            <person name="Takemoto M."/>
            <person name="Kawakami B."/>
            <person name="Yamazaki M."/>
            <person name="Watanabe K."/>
            <person name="Kumagai A."/>
            <person name="Itakura S."/>
            <person name="Fukuzumi Y."/>
            <person name="Fujimori Y."/>
            <person name="Komiyama M."/>
            <person name="Tashiro H."/>
            <person name="Tanigami A."/>
            <person name="Fujiwara T."/>
            <person name="Ono T."/>
            <person name="Yamada K."/>
            <person name="Fujii Y."/>
            <person name="Ozaki K."/>
            <person name="Hirao M."/>
            <person name="Ohmori Y."/>
            <person name="Kawabata A."/>
            <person name="Hikiji T."/>
            <person name="Kobatake N."/>
            <person name="Inagaki H."/>
            <person name="Ikema Y."/>
            <person name="Okamoto S."/>
            <person name="Okitani R."/>
            <person name="Kawakami T."/>
            <person name="Noguchi S."/>
            <person name="Itoh T."/>
            <person name="Shigeta K."/>
            <person name="Senba T."/>
            <person name="Matsumura K."/>
            <person name="Nakajima Y."/>
            <person name="Mizuno T."/>
            <person name="Morinaga M."/>
            <person name="Sasaki M."/>
            <person name="Togashi T."/>
            <person name="Oyama M."/>
            <person name="Hata H."/>
            <person name="Watanabe M."/>
            <person name="Komatsu T."/>
            <person name="Mizushima-Sugano J."/>
            <person name="Satoh T."/>
            <person name="Shirai Y."/>
            <person name="Takahashi Y."/>
            <person name="Nakagawa K."/>
            <person name="Okumura K."/>
            <person name="Nagase T."/>
            <person name="Nomura N."/>
            <person name="Kikuchi H."/>
            <person name="Masuho Y."/>
            <person name="Yamashita R."/>
            <person name="Nakai K."/>
            <person name="Yada T."/>
            <person name="Nakamura Y."/>
            <person name="Ohara O."/>
            <person name="Isogai T."/>
            <person name="Sugano S."/>
        </authorList>
    </citation>
    <scope>NUCLEOTIDE SEQUENCE [LARGE SCALE MRNA] OF 109-1523</scope>
    <scope>VARIANTS LEU-133; GLN-307; GLY-538 AND VAL-569</scope>
    <source>
        <tissue>Spleen</tissue>
    </source>
</reference>
<reference key="4">
    <citation type="journal article" date="2004" name="Genome Res.">
        <title>The status, quality, and expansion of the NIH full-length cDNA project: the Mammalian Gene Collection (MGC).</title>
        <authorList>
            <consortium name="The MGC Project Team"/>
        </authorList>
    </citation>
    <scope>NUCLEOTIDE SEQUENCE [LARGE SCALE MRNA] OF 1281-1523</scope>
    <source>
        <tissue>Muscle</tissue>
    </source>
</reference>
<reference key="5">
    <citation type="journal article" date="2006" name="Cell">
        <title>Global, in vivo, and site-specific phosphorylation dynamics in signaling networks.</title>
        <authorList>
            <person name="Olsen J.V."/>
            <person name="Blagoev B."/>
            <person name="Gnad F."/>
            <person name="Macek B."/>
            <person name="Kumar C."/>
            <person name="Mortensen P."/>
            <person name="Mann M."/>
        </authorList>
    </citation>
    <scope>PHOSPHORYLATION [LARGE SCALE ANALYSIS] AT SER-310 AND SER-1257</scope>
    <scope>IDENTIFICATION BY MASS SPECTROMETRY [LARGE SCALE ANALYSIS]</scope>
    <source>
        <tissue>Cervix carcinoma</tissue>
    </source>
</reference>
<reference key="6">
    <citation type="journal article" date="2008" name="J. Proteome Res.">
        <title>Combining protein-based IMAC, peptide-based IMAC, and MudPIT for efficient phosphoproteomic analysis.</title>
        <authorList>
            <person name="Cantin G.T."/>
            <person name="Yi W."/>
            <person name="Lu B."/>
            <person name="Park S.K."/>
            <person name="Xu T."/>
            <person name="Lee J.-D."/>
            <person name="Yates J.R. III"/>
        </authorList>
    </citation>
    <scope>IDENTIFICATION BY MASS SPECTROMETRY [LARGE SCALE ANALYSIS]</scope>
    <source>
        <tissue>Cervix carcinoma</tissue>
    </source>
</reference>
<reference key="7">
    <citation type="journal article" date="2008" name="Proc. Natl. Acad. Sci. U.S.A.">
        <title>A quantitative atlas of mitotic phosphorylation.</title>
        <authorList>
            <person name="Dephoure N."/>
            <person name="Zhou C."/>
            <person name="Villen J."/>
            <person name="Beausoleil S.A."/>
            <person name="Bakalarski C.E."/>
            <person name="Elledge S.J."/>
            <person name="Gygi S.P."/>
        </authorList>
    </citation>
    <scope>PHOSPHORYLATION [LARGE SCALE ANALYSIS] AT SER-170; SER-173; SER-191; SER-285 AND SER-1168</scope>
    <scope>IDENTIFICATION BY MASS SPECTROMETRY [LARGE SCALE ANALYSIS]</scope>
    <source>
        <tissue>Cervix carcinoma</tissue>
    </source>
</reference>
<reference key="8">
    <citation type="journal article" date="2009" name="Sci. Signal.">
        <title>Quantitative phosphoproteomic analysis of T cell receptor signaling reveals system-wide modulation of protein-protein interactions.</title>
        <authorList>
            <person name="Mayya V."/>
            <person name="Lundgren D.H."/>
            <person name="Hwang S.-I."/>
            <person name="Rezaul K."/>
            <person name="Wu L."/>
            <person name="Eng J.K."/>
            <person name="Rodionov V."/>
            <person name="Han D.K."/>
        </authorList>
    </citation>
    <scope>IDENTIFICATION BY MASS SPECTROMETRY [LARGE SCALE ANALYSIS]</scope>
    <source>
        <tissue>Leukemic T-cell</tissue>
    </source>
</reference>
<reference key="9">
    <citation type="journal article" date="2010" name="Sci. Signal.">
        <title>Quantitative phosphoproteomics reveals widespread full phosphorylation site occupancy during mitosis.</title>
        <authorList>
            <person name="Olsen J.V."/>
            <person name="Vermeulen M."/>
            <person name="Santamaria A."/>
            <person name="Kumar C."/>
            <person name="Miller M.L."/>
            <person name="Jensen L.J."/>
            <person name="Gnad F."/>
            <person name="Cox J."/>
            <person name="Jensen T.S."/>
            <person name="Nigg E.A."/>
            <person name="Brunak S."/>
            <person name="Mann M."/>
        </authorList>
    </citation>
    <scope>PHOSPHORYLATION [LARGE SCALE ANALYSIS] AT SER-1273</scope>
    <scope>IDENTIFICATION BY MASS SPECTROMETRY [LARGE SCALE ANALYSIS]</scope>
    <source>
        <tissue>Cervix carcinoma</tissue>
    </source>
</reference>
<reference key="10">
    <citation type="journal article" date="2011" name="BMC Syst. Biol.">
        <title>Initial characterization of the human central proteome.</title>
        <authorList>
            <person name="Burkard T.R."/>
            <person name="Planyavsky M."/>
            <person name="Kaupe I."/>
            <person name="Breitwieser F.P."/>
            <person name="Buerckstuemmer T."/>
            <person name="Bennett K.L."/>
            <person name="Superti-Furga G."/>
            <person name="Colinge J."/>
        </authorList>
    </citation>
    <scope>IDENTIFICATION BY MASS SPECTROMETRY [LARGE SCALE ANALYSIS]</scope>
</reference>
<reference key="11">
    <citation type="journal article" date="2013" name="J. Proteome Res.">
        <title>Toward a comprehensive characterization of a human cancer cell phosphoproteome.</title>
        <authorList>
            <person name="Zhou H."/>
            <person name="Di Palma S."/>
            <person name="Preisinger C."/>
            <person name="Peng M."/>
            <person name="Polat A.N."/>
            <person name="Heck A.J."/>
            <person name="Mohammed S."/>
        </authorList>
    </citation>
    <scope>PHOSPHORYLATION [LARGE SCALE ANALYSIS] AT SER-310; SER-367; SER-430; SER-964; SER-1168 AND SER-1257</scope>
    <scope>IDENTIFICATION BY MASS SPECTROMETRY [LARGE SCALE ANALYSIS]</scope>
    <source>
        <tissue>Cervix carcinoma</tissue>
        <tissue>Erythroleukemia</tissue>
    </source>
</reference>
<reference key="12">
    <citation type="journal article" date="2014" name="J. Proteomics">
        <title>An enzyme assisted RP-RPLC approach for in-depth analysis of human liver phosphoproteome.</title>
        <authorList>
            <person name="Bian Y."/>
            <person name="Song C."/>
            <person name="Cheng K."/>
            <person name="Dong M."/>
            <person name="Wang F."/>
            <person name="Huang J."/>
            <person name="Sun D."/>
            <person name="Wang L."/>
            <person name="Ye M."/>
            <person name="Zou H."/>
        </authorList>
    </citation>
    <scope>PHOSPHORYLATION [LARGE SCALE ANALYSIS] AT SER-285 AND SER-1273</scope>
    <scope>IDENTIFICATION BY MASS SPECTROMETRY [LARGE SCALE ANALYSIS]</scope>
    <source>
        <tissue>Liver</tissue>
    </source>
</reference>
<reference key="13">
    <citation type="journal article" date="2016" name="J. Cell Biol.">
        <title>EHBP1L1 coordinates Rab8 and Bin1 to regulate apical-directed transport in polarized epithelial cells.</title>
        <authorList>
            <person name="Nakajo A."/>
            <person name="Yoshimura S."/>
            <person name="Togawa H."/>
            <person name="Kunii M."/>
            <person name="Iwano T."/>
            <person name="Izumi A."/>
            <person name="Noguchi Y."/>
            <person name="Watanabe A."/>
            <person name="Goto A."/>
            <person name="Sato T."/>
            <person name="Harada A."/>
        </authorList>
    </citation>
    <scope>SUBCELLULAR LOCATION</scope>
</reference>
<reference key="14">
    <citation type="journal article" date="2016" name="Elife">
        <title>bMERB domains are bivalent Rab8 family effectors evolved by gene duplication.</title>
        <authorList>
            <person name="Rai A."/>
            <person name="Oprisko A."/>
            <person name="Campos J."/>
            <person name="Fu Y."/>
            <person name="Friese T."/>
            <person name="Itzen A."/>
            <person name="Goody R.S."/>
            <person name="Gazdag E.M."/>
            <person name="Muller M.P."/>
        </authorList>
    </citation>
    <scope>INTERACTION WITH RAB8A; RAB10; RAB13 AND RAB15</scope>
    <scope>DOMAIN</scope>
    <scope>FUNCTION</scope>
    <scope>ISOPRENYLATION</scope>
    <scope>SUBCELLULAR LOCATION</scope>
</reference>
<sequence length="1523" mass="161854">MTSVWKRLQRVGKRAAKFQFVACYHELVLECTKKWQPDKLVVVWTRRNRRICSKAHSWQPGIQNPYRGTVVWMVPENVDISVTLYRDPHVDQYEAKEWTFIIENESKGQRKVLATAEVDLARHAGPVPVQVPVRLRLKPKSVKVVQAELSLTLSGVLLREGRATDDDMQSLASLMSVKPSDVGNLDDFAESDEDEAHGPGAPEARARVPQPDPSRELKTLCEEEEEGQGRPQQAVASPSNAEDTSPAPVSAPAPPARTSRGQGSERANEAGGQVGPEAPRPPETSPEMRSSRQPAQDTAPTPAPRLRKGSDALRPPVPQGEDEVPKASGAPPAGLGSARETQAQACPQEGTEAHGARLGPSIEDKGSGDPFGRQRLKAEEMDTEDRPEASGVDTEPRSGGREANTKRSGVRAGEAEESSAVCQVDAEQRSKVRHVDTKGPEATGVMPEARCRGTPEAPPRGSQGRLGVRTRDEAPSGLSLPPAEPAGHSGQLGDLEGARAAAGQEREGAEVRGGAPGIEGTGLEQGPSVGAISTRPQVSSWQGALLSTAQGAISRGLGGWEAEAGGSGDLETETEVVGLEVLGTQEKEVEGSGFPETRTLEIEILGALEKEAARSRVLESEVAGTAQCEGLETQETEVGVIETPGTETEVLGTQKTEAGGSGVLQTRTTIAETEVLVTQEISGDLGPLKIEDTIQSEMLGTQETEVEASRVPESEAEGTEAKILGTQEITARDSGVREIEAEIAESDILVAQEIEVGLLGVLGIETGAAEGAILGTQEIASRDSGVPGLEADTTGIQVKEVGGSEVPEIATGTAETEILGTQEIASRSSGVPGLESEVAGAQETEVGGSGISGPEAGMAEARVLMTRKTEIIVPEAEKEEAQTSGVQEAETRVGSALKYEALRAPVTQPRVLGSQEAKAEISGVQGSETQVLRVQEAEAGVWGMSEGKSGAWGAQEAEMKVLESPENKSGTFKAQEAEAGVLGNEKGKEAEGSLTEASLPEAQVASGAGAGAPRASSPEKAEEDRRLPGSQAPPALVSSSQSLLEWCQEVTTGYRGVRITNFTTSWRNGLAFCAILHRFYPDKIDYASLDPLNIKQNNKQAFDGFAALGVSRLLEPADMVLLSVPDKLIVMTYLCQIRAFCTGQELQLVQLEGGGGAGTYRVGSAQPSPPDDLDAGGLAQRLRGHGAEGPQEPKEAADRADGAAPGVASRNAVAGRASKDGGAEAPRESRPAEVPAEGLVNGAGAPGGGGVRLRRPSVNGEPGSVPPPRAHGSFSHVRDADLLKKRRSRLRNSSSFSMDDPDAGAMGAAAAEGQAPDPSPAPGPPTAADSQQPPGGSSPSEEPPPSPGEEAGLQRFQDTSQYVCAELQALEQEQRQIDGRAAEVEMQLRSLMESGANKLQEEVLIQEWFTLVNKKNALIRRQDQLQLLMEEQDLERRFELLSRELRAMLAIEDWQKTSAQQHREQLLLEELVSLVNQRDELVRDLDHKERIALEEDERLERGLEQRRRKLSRQLSRRERCVLS</sequence>
<accession>Q8N3D4</accession>
<accession>Q8TB89</accession>
<accession>Q9H7M7</accession>
<protein>
    <recommendedName>
        <fullName>EH domain-binding protein 1-like protein 1</fullName>
    </recommendedName>
</protein>
<gene>
    <name type="primary">EHBP1L1</name>
</gene>
<proteinExistence type="evidence at protein level"/>
<keyword id="KW-0175">Coiled coil</keyword>
<keyword id="KW-0967">Endosome</keyword>
<keyword id="KW-0597">Phosphoprotein</keyword>
<keyword id="KW-1267">Proteomics identification</keyword>
<keyword id="KW-1185">Reference proteome</keyword>
<evidence type="ECO:0000250" key="1">
    <source>
        <dbReference type="UniProtKB" id="Q99MS7"/>
    </source>
</evidence>
<evidence type="ECO:0000255" key="2"/>
<evidence type="ECO:0000255" key="3">
    <source>
        <dbReference type="PROSITE-ProRule" id="PRU00044"/>
    </source>
</evidence>
<evidence type="ECO:0000255" key="4">
    <source>
        <dbReference type="PROSITE-ProRule" id="PRU01186"/>
    </source>
</evidence>
<evidence type="ECO:0000255" key="5">
    <source>
        <dbReference type="PROSITE-ProRule" id="PRU01195"/>
    </source>
</evidence>
<evidence type="ECO:0000256" key="6">
    <source>
        <dbReference type="SAM" id="MobiDB-lite"/>
    </source>
</evidence>
<evidence type="ECO:0000269" key="7">
    <source>
    </source>
</evidence>
<evidence type="ECO:0000269" key="8">
    <source>
    </source>
</evidence>
<evidence type="ECO:0000269" key="9">
    <source>
    </source>
</evidence>
<evidence type="ECO:0000305" key="10"/>
<evidence type="ECO:0000305" key="11">
    <source>
    </source>
</evidence>
<evidence type="ECO:0007744" key="12">
    <source>
    </source>
</evidence>
<evidence type="ECO:0007744" key="13">
    <source>
    </source>
</evidence>
<evidence type="ECO:0007744" key="14">
    <source>
    </source>
</evidence>
<evidence type="ECO:0007744" key="15">
    <source>
    </source>
</evidence>
<evidence type="ECO:0007744" key="16">
    <source>
    </source>
</evidence>
<feature type="chain" id="PRO_0000285204" description="EH domain-binding protein 1-like protein 1">
    <location>
        <begin position="1"/>
        <end position="1523"/>
    </location>
</feature>
<feature type="domain" description="C2 NT-type" evidence="4">
    <location>
        <begin position="8"/>
        <end position="157"/>
    </location>
</feature>
<feature type="domain" description="Calponin-homology (CH)" evidence="3">
    <location>
        <begin position="1037"/>
        <end position="1142"/>
    </location>
</feature>
<feature type="domain" description="bMERB" evidence="5 11">
    <location>
        <begin position="1349"/>
        <end position="1501"/>
    </location>
</feature>
<feature type="region of interest" description="Disordered" evidence="6">
    <location>
        <begin position="179"/>
        <end position="536"/>
    </location>
</feature>
<feature type="region of interest" description="Disordered" evidence="6">
    <location>
        <begin position="963"/>
        <end position="1036"/>
    </location>
</feature>
<feature type="region of interest" description="Disordered" evidence="6">
    <location>
        <begin position="1183"/>
        <end position="1352"/>
    </location>
</feature>
<feature type="coiled-coil region" evidence="2">
    <location>
        <begin position="1363"/>
        <end position="1515"/>
    </location>
</feature>
<feature type="short sequence motif" description="CAAX motif" evidence="11">
    <location>
        <begin position="1520"/>
        <end position="1523"/>
    </location>
</feature>
<feature type="compositionally biased region" description="Polar residues" evidence="6">
    <location>
        <begin position="230"/>
        <end position="243"/>
    </location>
</feature>
<feature type="compositionally biased region" description="Low complexity" evidence="6">
    <location>
        <begin position="327"/>
        <end position="338"/>
    </location>
</feature>
<feature type="compositionally biased region" description="Basic and acidic residues" evidence="6">
    <location>
        <begin position="376"/>
        <end position="405"/>
    </location>
</feature>
<feature type="compositionally biased region" description="Basic and acidic residues" evidence="6">
    <location>
        <begin position="426"/>
        <end position="439"/>
    </location>
</feature>
<feature type="compositionally biased region" description="Low complexity" evidence="6">
    <location>
        <begin position="1005"/>
        <end position="1016"/>
    </location>
</feature>
<feature type="compositionally biased region" description="Basic and acidic residues" evidence="6">
    <location>
        <begin position="1017"/>
        <end position="1027"/>
    </location>
</feature>
<feature type="compositionally biased region" description="Basic and acidic residues" evidence="6">
    <location>
        <begin position="1191"/>
        <end position="1201"/>
    </location>
</feature>
<feature type="compositionally biased region" description="Basic and acidic residues" evidence="6">
    <location>
        <begin position="1217"/>
        <end position="1231"/>
    </location>
</feature>
<feature type="compositionally biased region" description="Low complexity" evidence="6">
    <location>
        <begin position="1303"/>
        <end position="1316"/>
    </location>
</feature>
<feature type="compositionally biased region" description="Low complexity" evidence="6">
    <location>
        <begin position="1326"/>
        <end position="1340"/>
    </location>
</feature>
<feature type="modified residue" description="Phosphoserine" evidence="13">
    <location>
        <position position="170"/>
    </location>
</feature>
<feature type="modified residue" description="Phosphoserine" evidence="13">
    <location>
        <position position="173"/>
    </location>
</feature>
<feature type="modified residue" description="Phosphoserine" evidence="13">
    <location>
        <position position="191"/>
    </location>
</feature>
<feature type="modified residue" description="Phosphoserine" evidence="13 16">
    <location>
        <position position="285"/>
    </location>
</feature>
<feature type="modified residue" description="Phosphoserine" evidence="12 15">
    <location>
        <position position="310"/>
    </location>
</feature>
<feature type="modified residue" description="Phosphoserine" evidence="15">
    <location>
        <position position="367"/>
    </location>
</feature>
<feature type="modified residue" description="Phosphoserine" evidence="15">
    <location>
        <position position="430"/>
    </location>
</feature>
<feature type="modified residue" description="Phosphothreonine" evidence="1">
    <location>
        <position position="454"/>
    </location>
</feature>
<feature type="modified residue" description="Phosphoserine" evidence="1">
    <location>
        <position position="895"/>
    </location>
</feature>
<feature type="modified residue" description="Phosphoserine" evidence="15">
    <location>
        <position position="964"/>
    </location>
</feature>
<feature type="modified residue" description="Phosphoserine" evidence="13 15">
    <location>
        <position position="1168"/>
    </location>
</feature>
<feature type="modified residue" description="Phosphoserine" evidence="12 15">
    <location>
        <position position="1257"/>
    </location>
</feature>
<feature type="modified residue" description="Phosphoserine" evidence="14 16">
    <location>
        <position position="1273"/>
    </location>
</feature>
<feature type="sequence variant" id="VAR_061645" description="In dbSNP:rs1194100." evidence="7 8">
    <original>V</original>
    <variation>L</variation>
    <location>
        <position position="133"/>
    </location>
</feature>
<feature type="sequence variant" id="VAR_031993" description="In dbSNP:rs3741380." evidence="7">
    <original>R</original>
    <variation>Q</variation>
    <location>
        <position position="307"/>
    </location>
</feature>
<feature type="sequence variant" id="VAR_031994" description="In dbSNP:rs6591182." evidence="7">
    <original>V</original>
    <variation>G</variation>
    <location>
        <position position="538"/>
    </location>
</feature>
<feature type="sequence variant" id="VAR_031995" description="In dbSNP:rs1194099." evidence="7 8">
    <original>D</original>
    <variation>V</variation>
    <location>
        <position position="569"/>
    </location>
</feature>
<feature type="sequence variant" id="VAR_031996" description="In dbSNP:rs7931052.">
    <original>T</original>
    <variation>I</variation>
    <location>
        <position position="599"/>
    </location>
</feature>
<feature type="sequence variant" id="VAR_031997" description="In dbSNP:rs7931269.">
    <original>T</original>
    <variation>I</variation>
    <location>
        <position position="648"/>
    </location>
</feature>
<feature type="sequence conflict" description="In Ref. 2; CAD39093." evidence="10" ref="2">
    <original>P</original>
    <variation>L</variation>
    <location>
        <position position="1235"/>
    </location>
</feature>
<feature type="sequence conflict" description="In Ref. 2; CAD39093." evidence="10" ref="2">
    <original>D</original>
    <variation>E</variation>
    <location>
        <position position="1378"/>
    </location>
</feature>
<comment type="function">
    <text evidence="11">May act as Rab effector protein and play a role in vesicle trafficking.</text>
</comment>
<comment type="subunit">
    <text evidence="9">Interacts with RAB8A, RAB10, RAB13 and RAB15 (in their GTP-bound forms); at least in case of RAB8A can bind 2 molecules of RAB8A simultaneously; ternary complex formation of RAB8A, RAB13 and EHBP1L1 is possible.</text>
</comment>
<comment type="subcellular location">
    <subcellularLocation>
        <location evidence="11">Endosome</location>
    </subcellularLocation>
</comment>
<comment type="domain">
    <text evidence="9">The CAAX motif is a signal for prenylation and required for endosomal colocalization with Rab8 and Rab10.</text>
</comment>
<comment type="domain">
    <text evidence="9">The bivalent Mical/EHBP Rab binding (bMERB) domain, mediates binding to Rab8, Rab10, Rab10, Rab13 and Rab15 (in their GTP-bound forms).</text>
</comment>
<comment type="PTM">
    <text evidence="9">Prenylated (Probable). Farnelysation (predominant) and geranylgeranylation has been observed in vitro.</text>
</comment>
<dbReference type="EMBL" id="AP001362">
    <property type="status" value="NOT_ANNOTATED_CDS"/>
    <property type="molecule type" value="Genomic_DNA"/>
</dbReference>
<dbReference type="EMBL" id="AL834433">
    <property type="protein sequence ID" value="CAD39093.1"/>
    <property type="molecule type" value="mRNA"/>
</dbReference>
<dbReference type="EMBL" id="AK024451">
    <property type="protein sequence ID" value="BAB15741.1"/>
    <property type="molecule type" value="mRNA"/>
</dbReference>
<dbReference type="EMBL" id="BC024207">
    <property type="protein sequence ID" value="AAH24207.2"/>
    <property type="molecule type" value="mRNA"/>
</dbReference>
<dbReference type="CCDS" id="CCDS44649.1"/>
<dbReference type="RefSeq" id="NP_001092879.1">
    <property type="nucleotide sequence ID" value="NM_001099409.3"/>
</dbReference>
<dbReference type="SMR" id="Q8N3D4"/>
<dbReference type="BioGRID" id="129015">
    <property type="interactions" value="65"/>
</dbReference>
<dbReference type="FunCoup" id="Q8N3D4">
    <property type="interactions" value="112"/>
</dbReference>
<dbReference type="IntAct" id="Q8N3D4">
    <property type="interactions" value="13"/>
</dbReference>
<dbReference type="MINT" id="Q8N3D4"/>
<dbReference type="STRING" id="9606.ENSP00000312671"/>
<dbReference type="GlyGen" id="Q8N3D4">
    <property type="glycosylation" value="4 sites, 1 O-linked glycan (2 sites)"/>
</dbReference>
<dbReference type="iPTMnet" id="Q8N3D4"/>
<dbReference type="PhosphoSitePlus" id="Q8N3D4"/>
<dbReference type="BioMuta" id="EHBP1L1"/>
<dbReference type="DMDM" id="146286137"/>
<dbReference type="jPOST" id="Q8N3D4"/>
<dbReference type="MassIVE" id="Q8N3D4"/>
<dbReference type="PaxDb" id="9606-ENSP00000312671"/>
<dbReference type="PeptideAtlas" id="Q8N3D4"/>
<dbReference type="ProteomicsDB" id="71793"/>
<dbReference type="Pumba" id="Q8N3D4"/>
<dbReference type="Antibodypedia" id="51069">
    <property type="antibodies" value="11 antibodies from 7 providers"/>
</dbReference>
<dbReference type="DNASU" id="254102"/>
<dbReference type="Ensembl" id="ENST00000309295.9">
    <property type="protein sequence ID" value="ENSP00000312671.4"/>
    <property type="gene ID" value="ENSG00000173442.13"/>
</dbReference>
<dbReference type="GeneID" id="254102"/>
<dbReference type="KEGG" id="hsa:254102"/>
<dbReference type="MANE-Select" id="ENST00000309295.9">
    <property type="protein sequence ID" value="ENSP00000312671.4"/>
    <property type="RefSeq nucleotide sequence ID" value="NM_001099409.3"/>
    <property type="RefSeq protein sequence ID" value="NP_001092879.1"/>
</dbReference>
<dbReference type="UCSC" id="uc001oeo.5">
    <property type="organism name" value="human"/>
</dbReference>
<dbReference type="AGR" id="HGNC:30682"/>
<dbReference type="CTD" id="254102"/>
<dbReference type="DisGeNET" id="254102"/>
<dbReference type="GeneCards" id="EHBP1L1"/>
<dbReference type="HGNC" id="HGNC:30682">
    <property type="gene designation" value="EHBP1L1"/>
</dbReference>
<dbReference type="HPA" id="ENSG00000173442">
    <property type="expression patterns" value="Tissue enhanced (skeletal)"/>
</dbReference>
<dbReference type="MIM" id="619583">
    <property type="type" value="gene"/>
</dbReference>
<dbReference type="neXtProt" id="NX_Q8N3D4"/>
<dbReference type="OpenTargets" id="ENSG00000173442"/>
<dbReference type="PharmGKB" id="PA134871712"/>
<dbReference type="VEuPathDB" id="HostDB:ENSG00000173442"/>
<dbReference type="eggNOG" id="KOG0035">
    <property type="taxonomic scope" value="Eukaryota"/>
</dbReference>
<dbReference type="GeneTree" id="ENSGT00940000161027"/>
<dbReference type="HOGENOM" id="CLU_004178_0_0_1"/>
<dbReference type="InParanoid" id="Q8N3D4"/>
<dbReference type="OMA" id="WQKTSAQ"/>
<dbReference type="OrthoDB" id="5972258at2759"/>
<dbReference type="PAN-GO" id="Q8N3D4">
    <property type="GO annotations" value="3 GO annotations based on evolutionary models"/>
</dbReference>
<dbReference type="PhylomeDB" id="Q8N3D4"/>
<dbReference type="TreeFam" id="TF105382"/>
<dbReference type="PathwayCommons" id="Q8N3D4"/>
<dbReference type="SignaLink" id="Q8N3D4"/>
<dbReference type="BioGRID-ORCS" id="254102">
    <property type="hits" value="45 hits in 1154 CRISPR screens"/>
</dbReference>
<dbReference type="ChiTaRS" id="EHBP1L1">
    <property type="organism name" value="human"/>
</dbReference>
<dbReference type="GenomeRNAi" id="254102"/>
<dbReference type="Pharos" id="Q8N3D4">
    <property type="development level" value="Tdark"/>
</dbReference>
<dbReference type="PRO" id="PR:Q8N3D4"/>
<dbReference type="Proteomes" id="UP000005640">
    <property type="component" value="Chromosome 11"/>
</dbReference>
<dbReference type="RNAct" id="Q8N3D4">
    <property type="molecule type" value="protein"/>
</dbReference>
<dbReference type="Bgee" id="ENSG00000173442">
    <property type="expression patterns" value="Expressed in granulocyte and 155 other cell types or tissues"/>
</dbReference>
<dbReference type="ExpressionAtlas" id="Q8N3D4">
    <property type="expression patterns" value="baseline and differential"/>
</dbReference>
<dbReference type="GO" id="GO:0005768">
    <property type="term" value="C:endosome"/>
    <property type="evidence" value="ECO:0007669"/>
    <property type="project" value="UniProtKB-SubCell"/>
</dbReference>
<dbReference type="GO" id="GO:0016020">
    <property type="term" value="C:membrane"/>
    <property type="evidence" value="ECO:0007005"/>
    <property type="project" value="UniProtKB"/>
</dbReference>
<dbReference type="CDD" id="cd21255">
    <property type="entry name" value="CH_EHBP1L1"/>
    <property type="match status" value="1"/>
</dbReference>
<dbReference type="FunFam" id="1.10.418.10:FF:000023">
    <property type="entry name" value="EH domain-binding protein 1 isoform X1"/>
    <property type="match status" value="1"/>
</dbReference>
<dbReference type="Gene3D" id="1.10.418.10">
    <property type="entry name" value="Calponin-like domain"/>
    <property type="match status" value="1"/>
</dbReference>
<dbReference type="InterPro" id="IPR022735">
    <property type="entry name" value="bMERB_dom"/>
</dbReference>
<dbReference type="InterPro" id="IPR001715">
    <property type="entry name" value="CH_dom"/>
</dbReference>
<dbReference type="InterPro" id="IPR036872">
    <property type="entry name" value="CH_dom_sf"/>
</dbReference>
<dbReference type="InterPro" id="IPR050540">
    <property type="entry name" value="F-actin_Monoox_Mical"/>
</dbReference>
<dbReference type="InterPro" id="IPR019448">
    <property type="entry name" value="NT-C2"/>
</dbReference>
<dbReference type="PANTHER" id="PTHR23167">
    <property type="entry name" value="CALPONIN HOMOLOGY DOMAIN-CONTAINING PROTEIN DDB_G0272472-RELATED"/>
    <property type="match status" value="1"/>
</dbReference>
<dbReference type="PANTHER" id="PTHR23167:SF42">
    <property type="entry name" value="EH DOMAIN-BINDING PROTEIN 1-LIKE PROTEIN 1"/>
    <property type="match status" value="1"/>
</dbReference>
<dbReference type="Pfam" id="PF12130">
    <property type="entry name" value="bMERB_dom"/>
    <property type="match status" value="1"/>
</dbReference>
<dbReference type="Pfam" id="PF00307">
    <property type="entry name" value="CH"/>
    <property type="match status" value="1"/>
</dbReference>
<dbReference type="Pfam" id="PF10358">
    <property type="entry name" value="NT-C2"/>
    <property type="match status" value="1"/>
</dbReference>
<dbReference type="SMART" id="SM00033">
    <property type="entry name" value="CH"/>
    <property type="match status" value="1"/>
</dbReference>
<dbReference type="SMART" id="SM01203">
    <property type="entry name" value="DUF3585"/>
    <property type="match status" value="1"/>
</dbReference>
<dbReference type="SUPFAM" id="SSF47576">
    <property type="entry name" value="Calponin-homology domain, CH-domain"/>
    <property type="match status" value="1"/>
</dbReference>
<dbReference type="PROSITE" id="PS51848">
    <property type="entry name" value="BMERB"/>
    <property type="match status" value="1"/>
</dbReference>
<dbReference type="PROSITE" id="PS51840">
    <property type="entry name" value="C2_NT"/>
    <property type="match status" value="1"/>
</dbReference>
<dbReference type="PROSITE" id="PS50021">
    <property type="entry name" value="CH"/>
    <property type="match status" value="1"/>
</dbReference>
<name>EH1L1_HUMAN</name>